<sequence length="621" mass="66420">MAPTLAPFAARWDAEADRRMALRTPEHLKALMDAQKGYNSARSTAATAKSQRTAARAASKNPLSTVRRAARTADKAARTHRDQAKTKLKAARKDYPATLRARAVQAHAMHAVPGAGISALGWDQAGAWPVAGSLALIAANVAALVIGRRKVAVAVADELSAEERRLVERLDPSYWAQHADERGLVGTVTTPVQVTPAGLVTTVRLDGRWKPSAFKAKHEEIRALLGARTDLRMEIKAGSHGDRAVITLRTRSAADGIDLTGWTPGAPWGVDTVTGEPVQVPLGRRMLIAGTSGSGKSWSTRALLAEGSEYADHRLVVVDPKRVEAINWQHRARTAISIEDVLDVTDELVEEMHERLELIPRGQDVIQISPERPRITVFIDEGAEVIAMAKKTRAKGSKEEPGDPDWSRIMENLSTLARMARAAEIILIWATQKPTMDAKGGIDPQISAQITYRAALALSTSGESRVVFGEDATEKGWHAHELPMPGVAMLRSGPKVQPHPINTRAFSPADVIALPDRPVWRRQESPARSAGASAPAPLRLVKETAPAAEVPAQPTKAPTNREKVAAAIGTGATTVADVATVTGINKGSVSKAVKQLLDAGEVLRSEDGSLSVVTQVGEVSA</sequence>
<proteinExistence type="predicted"/>
<feature type="chain" id="PRO_0000098326" description="Protein Tra">
    <location>
        <begin position="1"/>
        <end position="621"/>
    </location>
</feature>
<feature type="transmembrane region" description="Helical" evidence="1">
    <location>
        <begin position="126"/>
        <end position="146"/>
    </location>
</feature>
<feature type="transmembrane region" description="Helical" evidence="1">
    <location>
        <begin position="564"/>
        <end position="584"/>
    </location>
</feature>
<feature type="domain" description="FtsK" evidence="2">
    <location>
        <begin position="275"/>
        <end position="465"/>
    </location>
</feature>
<feature type="binding site" evidence="2">
    <location>
        <begin position="290"/>
        <end position="297"/>
    </location>
    <ligand>
        <name>ATP</name>
        <dbReference type="ChEBI" id="CHEBI:30616"/>
    </ligand>
</feature>
<comment type="function">
    <text>Major protein required for plasmid transfer.</text>
</comment>
<comment type="subcellular location">
    <subcellularLocation>
        <location evidence="3">Cell membrane</location>
        <topology evidence="3">Multi-pass membrane protein</topology>
    </subcellularLocation>
</comment>
<evidence type="ECO:0000255" key="1"/>
<evidence type="ECO:0000255" key="2">
    <source>
        <dbReference type="PROSITE-ProRule" id="PRU00289"/>
    </source>
</evidence>
<evidence type="ECO:0000305" key="3"/>
<reference key="1">
    <citation type="journal article" date="1988" name="J. Bacteriol.">
        <title>Complete nucleotide sequence of the Streptomyces lividans plasmid pIJ101 and correlation of the sequence with genetic properties.</title>
        <authorList>
            <person name="Kendall K.J."/>
            <person name="Cohen S.N."/>
        </authorList>
    </citation>
    <scope>NUCLEOTIDE SEQUENCE [GENOMIC DNA]</scope>
</reference>
<protein>
    <recommendedName>
        <fullName>Protein Tra</fullName>
    </recommendedName>
</protein>
<geneLocation type="plasmid">
    <name>pIJ101</name>
</geneLocation>
<organism>
    <name type="scientific">Streptomyces lividans</name>
    <dbReference type="NCBI Taxonomy" id="1916"/>
    <lineage>
        <taxon>Bacteria</taxon>
        <taxon>Bacillati</taxon>
        <taxon>Actinomycetota</taxon>
        <taxon>Actinomycetes</taxon>
        <taxon>Kitasatosporales</taxon>
        <taxon>Streptomycetaceae</taxon>
        <taxon>Streptomyces</taxon>
    </lineage>
</organism>
<accession>P22409</accession>
<keyword id="KW-0067">ATP-binding</keyword>
<keyword id="KW-1003">Cell membrane</keyword>
<keyword id="KW-0472">Membrane</keyword>
<keyword id="KW-0547">Nucleotide-binding</keyword>
<keyword id="KW-0614">Plasmid</keyword>
<keyword id="KW-0812">Transmembrane</keyword>
<keyword id="KW-1133">Transmembrane helix</keyword>
<dbReference type="EMBL" id="M21778">
    <property type="protein sequence ID" value="AAA88410.1"/>
    <property type="molecule type" value="Genomic_DNA"/>
</dbReference>
<dbReference type="PIR" id="G31844">
    <property type="entry name" value="G31844"/>
</dbReference>
<dbReference type="RefSeq" id="NP_040447.1">
    <property type="nucleotide sequence ID" value="NC_001387.1"/>
</dbReference>
<dbReference type="SMR" id="P22409"/>
<dbReference type="TCDB" id="3.A.12.2.1">
    <property type="family name" value="the septal dna translocator (s-dna-t) family"/>
</dbReference>
<dbReference type="GO" id="GO:0005886">
    <property type="term" value="C:plasma membrane"/>
    <property type="evidence" value="ECO:0007669"/>
    <property type="project" value="UniProtKB-SubCell"/>
</dbReference>
<dbReference type="GO" id="GO:0005524">
    <property type="term" value="F:ATP binding"/>
    <property type="evidence" value="ECO:0007669"/>
    <property type="project" value="UniProtKB-KW"/>
</dbReference>
<dbReference type="GO" id="GO:0003677">
    <property type="term" value="F:DNA binding"/>
    <property type="evidence" value="ECO:0007669"/>
    <property type="project" value="InterPro"/>
</dbReference>
<dbReference type="Gene3D" id="3.40.50.300">
    <property type="entry name" value="P-loop containing nucleotide triphosphate hydrolases"/>
    <property type="match status" value="1"/>
</dbReference>
<dbReference type="InterPro" id="IPR050206">
    <property type="entry name" value="FtsK/SpoIIIE/SftA"/>
</dbReference>
<dbReference type="InterPro" id="IPR002543">
    <property type="entry name" value="FtsK_dom"/>
</dbReference>
<dbReference type="InterPro" id="IPR027417">
    <property type="entry name" value="P-loop_NTPase"/>
</dbReference>
<dbReference type="PANTHER" id="PTHR22683:SF41">
    <property type="entry name" value="DNA TRANSLOCASE FTSK"/>
    <property type="match status" value="1"/>
</dbReference>
<dbReference type="PANTHER" id="PTHR22683">
    <property type="entry name" value="SPORULATION PROTEIN RELATED"/>
    <property type="match status" value="1"/>
</dbReference>
<dbReference type="Pfam" id="PF01580">
    <property type="entry name" value="FtsK_SpoIIIE"/>
    <property type="match status" value="1"/>
</dbReference>
<dbReference type="SUPFAM" id="SSF52540">
    <property type="entry name" value="P-loop containing nucleoside triphosphate hydrolases"/>
    <property type="match status" value="1"/>
</dbReference>
<dbReference type="PROSITE" id="PS50901">
    <property type="entry name" value="FTSK"/>
    <property type="match status" value="1"/>
</dbReference>
<gene>
    <name type="primary">tra</name>
    <name type="synonym">kilA</name>
</gene>
<name>TRA_STRLI</name>